<dbReference type="EC" id="2.3.1.-" evidence="5 6"/>
<dbReference type="EC" id="2.3.1.24" evidence="5"/>
<dbReference type="EMBL" id="AY029531">
    <property type="protein sequence ID" value="AAK40299.1"/>
    <property type="molecule type" value="mRNA"/>
</dbReference>
<dbReference type="EMBL" id="AK013554">
    <property type="protein sequence ID" value="BAB28903.1"/>
    <property type="molecule type" value="mRNA"/>
</dbReference>
<dbReference type="EMBL" id="AK021316">
    <property type="protein sequence ID" value="BAB32370.3"/>
    <property type="molecule type" value="mRNA"/>
</dbReference>
<dbReference type="EMBL" id="AK028937">
    <property type="protein sequence ID" value="BAC26202.1"/>
    <property type="molecule type" value="mRNA"/>
</dbReference>
<dbReference type="EMBL" id="AK028945">
    <property type="protein sequence ID" value="BAC26208.1"/>
    <property type="molecule type" value="mRNA"/>
</dbReference>
<dbReference type="EMBL" id="AK030280">
    <property type="protein sequence ID" value="BAC26876.1"/>
    <property type="molecule type" value="mRNA"/>
</dbReference>
<dbReference type="EMBL" id="BC003946">
    <property type="protein sequence ID" value="AAH03946.1"/>
    <property type="molecule type" value="mRNA"/>
</dbReference>
<dbReference type="CCDS" id="CCDS22086.1"/>
<dbReference type="RefSeq" id="NP_080334.3">
    <property type="nucleotide sequence ID" value="NM_026058.4"/>
</dbReference>
<dbReference type="RefSeq" id="XP_006508924.1">
    <property type="nucleotide sequence ID" value="XM_006508861.4"/>
</dbReference>
<dbReference type="RefSeq" id="XP_006508925.1">
    <property type="nucleotide sequence ID" value="XM_006508862.5"/>
</dbReference>
<dbReference type="RefSeq" id="XP_006508926.1">
    <property type="nucleotide sequence ID" value="XM_006508863.4"/>
</dbReference>
<dbReference type="RefSeq" id="XP_030099592.1">
    <property type="nucleotide sequence ID" value="XM_030243732.2"/>
</dbReference>
<dbReference type="RefSeq" id="XP_036010142.1">
    <property type="nucleotide sequence ID" value="XM_036154249.1"/>
</dbReference>
<dbReference type="SMR" id="Q9D6J1"/>
<dbReference type="BioGRID" id="212053">
    <property type="interactions" value="1"/>
</dbReference>
<dbReference type="FunCoup" id="Q9D6J1">
    <property type="interactions" value="796"/>
</dbReference>
<dbReference type="IntAct" id="Q9D6J1">
    <property type="interactions" value="1"/>
</dbReference>
<dbReference type="STRING" id="10090.ENSMUSP00000008350"/>
<dbReference type="SwissLipids" id="SLP:000000117"/>
<dbReference type="GlyCosmos" id="Q9D6J1">
    <property type="glycosylation" value="1 site, No reported glycans"/>
</dbReference>
<dbReference type="GlyGen" id="Q9D6J1">
    <property type="glycosylation" value="1 site"/>
</dbReference>
<dbReference type="iPTMnet" id="Q9D6J1"/>
<dbReference type="PhosphoSitePlus" id="Q9D6J1"/>
<dbReference type="PaxDb" id="10090-ENSMUSP00000008350"/>
<dbReference type="PeptideAtlas" id="Q9D6J1"/>
<dbReference type="ProteomicsDB" id="281589"/>
<dbReference type="Pumba" id="Q9D6J1"/>
<dbReference type="Antibodypedia" id="24821">
    <property type="antibodies" value="284 antibodies from 30 providers"/>
</dbReference>
<dbReference type="DNASU" id="67260"/>
<dbReference type="Ensembl" id="ENSMUST00000008350.16">
    <property type="protein sequence ID" value="ENSMUSP00000008350.9"/>
    <property type="gene ID" value="ENSMUSG00000008206.17"/>
</dbReference>
<dbReference type="GeneID" id="67260"/>
<dbReference type="KEGG" id="mmu:67260"/>
<dbReference type="UCSC" id="uc009ktx.2">
    <property type="organism name" value="mouse"/>
</dbReference>
<dbReference type="AGR" id="MGI:1914510"/>
<dbReference type="CTD" id="79603"/>
<dbReference type="MGI" id="MGI:1914510">
    <property type="gene designation" value="Cers4"/>
</dbReference>
<dbReference type="VEuPathDB" id="HostDB:ENSMUSG00000008206"/>
<dbReference type="eggNOG" id="KOG1607">
    <property type="taxonomic scope" value="Eukaryota"/>
</dbReference>
<dbReference type="GeneTree" id="ENSGT01030000234515"/>
<dbReference type="InParanoid" id="Q9D6J1"/>
<dbReference type="OMA" id="FCLILRM"/>
<dbReference type="OrthoDB" id="537032at2759"/>
<dbReference type="PhylomeDB" id="Q9D6J1"/>
<dbReference type="TreeFam" id="TF314319"/>
<dbReference type="BRENDA" id="2.3.1.297">
    <property type="organism ID" value="3474"/>
</dbReference>
<dbReference type="Reactome" id="R-MMU-1660661">
    <property type="pathway name" value="Sphingolipid de novo biosynthesis"/>
</dbReference>
<dbReference type="UniPathway" id="UPA00222"/>
<dbReference type="BioGRID-ORCS" id="67260">
    <property type="hits" value="5 hits in 79 CRISPR screens"/>
</dbReference>
<dbReference type="PRO" id="PR:Q9D6J1"/>
<dbReference type="Proteomes" id="UP000000589">
    <property type="component" value="Chromosome 8"/>
</dbReference>
<dbReference type="RNAct" id="Q9D6J1">
    <property type="molecule type" value="protein"/>
</dbReference>
<dbReference type="Bgee" id="ENSMUSG00000008206">
    <property type="expression patterns" value="Expressed in tail skin and 257 other cell types or tissues"/>
</dbReference>
<dbReference type="ExpressionAtlas" id="Q9D6J1">
    <property type="expression patterns" value="baseline and differential"/>
</dbReference>
<dbReference type="GO" id="GO:0005783">
    <property type="term" value="C:endoplasmic reticulum"/>
    <property type="evidence" value="ECO:0000314"/>
    <property type="project" value="MGI"/>
</dbReference>
<dbReference type="GO" id="GO:0005789">
    <property type="term" value="C:endoplasmic reticulum membrane"/>
    <property type="evidence" value="ECO:0007669"/>
    <property type="project" value="UniProtKB-SubCell"/>
</dbReference>
<dbReference type="GO" id="GO:0003677">
    <property type="term" value="F:DNA binding"/>
    <property type="evidence" value="ECO:0007669"/>
    <property type="project" value="InterPro"/>
</dbReference>
<dbReference type="GO" id="GO:0050291">
    <property type="term" value="F:sphingosine N-acyltransferase activity"/>
    <property type="evidence" value="ECO:0000314"/>
    <property type="project" value="MGI"/>
</dbReference>
<dbReference type="GO" id="GO:0046513">
    <property type="term" value="P:ceramide biosynthetic process"/>
    <property type="evidence" value="ECO:0000314"/>
    <property type="project" value="MGI"/>
</dbReference>
<dbReference type="GO" id="GO:0030148">
    <property type="term" value="P:sphingolipid biosynthetic process"/>
    <property type="evidence" value="ECO:0000314"/>
    <property type="project" value="MGI"/>
</dbReference>
<dbReference type="CDD" id="cd00086">
    <property type="entry name" value="homeodomain"/>
    <property type="match status" value="1"/>
</dbReference>
<dbReference type="FunFam" id="1.10.10.60:FF:000020">
    <property type="entry name" value="Ceramide synthase 5"/>
    <property type="match status" value="1"/>
</dbReference>
<dbReference type="Gene3D" id="1.10.10.60">
    <property type="entry name" value="Homeodomain-like"/>
    <property type="match status" value="1"/>
</dbReference>
<dbReference type="InterPro" id="IPR001356">
    <property type="entry name" value="HD"/>
</dbReference>
<dbReference type="InterPro" id="IPR009057">
    <property type="entry name" value="Homeodomain-like_sf"/>
</dbReference>
<dbReference type="InterPro" id="IPR016439">
    <property type="entry name" value="Lag1/Lac1-like"/>
</dbReference>
<dbReference type="InterPro" id="IPR006634">
    <property type="entry name" value="TLC-dom"/>
</dbReference>
<dbReference type="PANTHER" id="PTHR12560:SF6">
    <property type="entry name" value="CERAMIDE SYNTHASE 4"/>
    <property type="match status" value="1"/>
</dbReference>
<dbReference type="PANTHER" id="PTHR12560">
    <property type="entry name" value="LONGEVITY ASSURANCE FACTOR 1 LAG1"/>
    <property type="match status" value="1"/>
</dbReference>
<dbReference type="Pfam" id="PF00046">
    <property type="entry name" value="Homeodomain"/>
    <property type="match status" value="1"/>
</dbReference>
<dbReference type="Pfam" id="PF03798">
    <property type="entry name" value="TRAM_LAG1_CLN8"/>
    <property type="match status" value="1"/>
</dbReference>
<dbReference type="PIRSF" id="PIRSF005225">
    <property type="entry name" value="LAG1_LAC1"/>
    <property type="match status" value="1"/>
</dbReference>
<dbReference type="SMART" id="SM00724">
    <property type="entry name" value="TLC"/>
    <property type="match status" value="1"/>
</dbReference>
<dbReference type="SUPFAM" id="SSF46689">
    <property type="entry name" value="Homeodomain-like"/>
    <property type="match status" value="1"/>
</dbReference>
<dbReference type="PROSITE" id="PS50922">
    <property type="entry name" value="TLC"/>
    <property type="match status" value="1"/>
</dbReference>
<sequence length="393" mass="46017">MSFSLSEWLWQETYWLPPNVTWAELEDRDGLVFAHPHHVLAAFPVALVLVAVRIVFERFVALPLSRWMGVQDPIRRKIKPNPVLEKYFLRMKQCPEETQMVLLASQCGLTLRQTQRWFRRRRNQDRPSLSKKFCEACWRFVFYLCSFVGGTSILYHESWLWSPSLCWENYPHQTLNLSLYWWYLLELGFYLSLLITLPFDVKRKDFKEQVVHHFVAVGLIGFSYSVNLLRIGAVVLLLHDCSDYLLEGCKILNYAHFRRGCDALFIMFALVFFYTRLIFFPTQVIYTSVYDSIKNSGPFFGYYFFIVLLVMLQILHVYWFCLILRMLYSFLHKGQMTEDIRSDVEEPDSSDDEPVSEGPQLKNGMARGSRVAVTNGPRSRAAACLTNGHTRAT</sequence>
<protein>
    <recommendedName>
        <fullName evidence="1">Ceramide synthase 4</fullName>
        <shortName evidence="1">CerS4</shortName>
        <ecNumber evidence="5 6">2.3.1.-</ecNumber>
    </recommendedName>
    <alternativeName>
        <fullName evidence="8">LAG1 longevity assurance homolog 4</fullName>
    </alternativeName>
    <alternativeName>
        <fullName evidence="9">Sphingosine N-acyltransferase CERS4</fullName>
        <ecNumber evidence="5">2.3.1.24</ecNumber>
    </alternativeName>
    <alternativeName>
        <fullName evidence="8">Translocating chain-associating membrane protein homolog 1</fullName>
        <shortName evidence="7">TRAM homolog 1</shortName>
    </alternativeName>
</protein>
<reference key="1">
    <citation type="submission" date="2001-04" db="EMBL/GenBank/DDBJ databases">
        <authorList>
            <person name="Hartmann E."/>
        </authorList>
    </citation>
    <scope>NUCLEOTIDE SEQUENCE [MRNA]</scope>
</reference>
<reference key="2">
    <citation type="journal article" date="2005" name="Science">
        <title>The transcriptional landscape of the mammalian genome.</title>
        <authorList>
            <person name="Carninci P."/>
            <person name="Kasukawa T."/>
            <person name="Katayama S."/>
            <person name="Gough J."/>
            <person name="Frith M.C."/>
            <person name="Maeda N."/>
            <person name="Oyama R."/>
            <person name="Ravasi T."/>
            <person name="Lenhard B."/>
            <person name="Wells C."/>
            <person name="Kodzius R."/>
            <person name="Shimokawa K."/>
            <person name="Bajic V.B."/>
            <person name="Brenner S.E."/>
            <person name="Batalov S."/>
            <person name="Forrest A.R."/>
            <person name="Zavolan M."/>
            <person name="Davis M.J."/>
            <person name="Wilming L.G."/>
            <person name="Aidinis V."/>
            <person name="Allen J.E."/>
            <person name="Ambesi-Impiombato A."/>
            <person name="Apweiler R."/>
            <person name="Aturaliya R.N."/>
            <person name="Bailey T.L."/>
            <person name="Bansal M."/>
            <person name="Baxter L."/>
            <person name="Beisel K.W."/>
            <person name="Bersano T."/>
            <person name="Bono H."/>
            <person name="Chalk A.M."/>
            <person name="Chiu K.P."/>
            <person name="Choudhary V."/>
            <person name="Christoffels A."/>
            <person name="Clutterbuck D.R."/>
            <person name="Crowe M.L."/>
            <person name="Dalla E."/>
            <person name="Dalrymple B.P."/>
            <person name="de Bono B."/>
            <person name="Della Gatta G."/>
            <person name="di Bernardo D."/>
            <person name="Down T."/>
            <person name="Engstrom P."/>
            <person name="Fagiolini M."/>
            <person name="Faulkner G."/>
            <person name="Fletcher C.F."/>
            <person name="Fukushima T."/>
            <person name="Furuno M."/>
            <person name="Futaki S."/>
            <person name="Gariboldi M."/>
            <person name="Georgii-Hemming P."/>
            <person name="Gingeras T.R."/>
            <person name="Gojobori T."/>
            <person name="Green R.E."/>
            <person name="Gustincich S."/>
            <person name="Harbers M."/>
            <person name="Hayashi Y."/>
            <person name="Hensch T.K."/>
            <person name="Hirokawa N."/>
            <person name="Hill D."/>
            <person name="Huminiecki L."/>
            <person name="Iacono M."/>
            <person name="Ikeo K."/>
            <person name="Iwama A."/>
            <person name="Ishikawa T."/>
            <person name="Jakt M."/>
            <person name="Kanapin A."/>
            <person name="Katoh M."/>
            <person name="Kawasawa Y."/>
            <person name="Kelso J."/>
            <person name="Kitamura H."/>
            <person name="Kitano H."/>
            <person name="Kollias G."/>
            <person name="Krishnan S.P."/>
            <person name="Kruger A."/>
            <person name="Kummerfeld S.K."/>
            <person name="Kurochkin I.V."/>
            <person name="Lareau L.F."/>
            <person name="Lazarevic D."/>
            <person name="Lipovich L."/>
            <person name="Liu J."/>
            <person name="Liuni S."/>
            <person name="McWilliam S."/>
            <person name="Madan Babu M."/>
            <person name="Madera M."/>
            <person name="Marchionni L."/>
            <person name="Matsuda H."/>
            <person name="Matsuzawa S."/>
            <person name="Miki H."/>
            <person name="Mignone F."/>
            <person name="Miyake S."/>
            <person name="Morris K."/>
            <person name="Mottagui-Tabar S."/>
            <person name="Mulder N."/>
            <person name="Nakano N."/>
            <person name="Nakauchi H."/>
            <person name="Ng P."/>
            <person name="Nilsson R."/>
            <person name="Nishiguchi S."/>
            <person name="Nishikawa S."/>
            <person name="Nori F."/>
            <person name="Ohara O."/>
            <person name="Okazaki Y."/>
            <person name="Orlando V."/>
            <person name="Pang K.C."/>
            <person name="Pavan W.J."/>
            <person name="Pavesi G."/>
            <person name="Pesole G."/>
            <person name="Petrovsky N."/>
            <person name="Piazza S."/>
            <person name="Reed J."/>
            <person name="Reid J.F."/>
            <person name="Ring B.Z."/>
            <person name="Ringwald M."/>
            <person name="Rost B."/>
            <person name="Ruan Y."/>
            <person name="Salzberg S.L."/>
            <person name="Sandelin A."/>
            <person name="Schneider C."/>
            <person name="Schoenbach C."/>
            <person name="Sekiguchi K."/>
            <person name="Semple C.A."/>
            <person name="Seno S."/>
            <person name="Sessa L."/>
            <person name="Sheng Y."/>
            <person name="Shibata Y."/>
            <person name="Shimada H."/>
            <person name="Shimada K."/>
            <person name="Silva D."/>
            <person name="Sinclair B."/>
            <person name="Sperling S."/>
            <person name="Stupka E."/>
            <person name="Sugiura K."/>
            <person name="Sultana R."/>
            <person name="Takenaka Y."/>
            <person name="Taki K."/>
            <person name="Tammoja K."/>
            <person name="Tan S.L."/>
            <person name="Tang S."/>
            <person name="Taylor M.S."/>
            <person name="Tegner J."/>
            <person name="Teichmann S.A."/>
            <person name="Ueda H.R."/>
            <person name="van Nimwegen E."/>
            <person name="Verardo R."/>
            <person name="Wei C.L."/>
            <person name="Yagi K."/>
            <person name="Yamanishi H."/>
            <person name="Zabarovsky E."/>
            <person name="Zhu S."/>
            <person name="Zimmer A."/>
            <person name="Hide W."/>
            <person name="Bult C."/>
            <person name="Grimmond S.M."/>
            <person name="Teasdale R.D."/>
            <person name="Liu E.T."/>
            <person name="Brusic V."/>
            <person name="Quackenbush J."/>
            <person name="Wahlestedt C."/>
            <person name="Mattick J.S."/>
            <person name="Hume D.A."/>
            <person name="Kai C."/>
            <person name="Sasaki D."/>
            <person name="Tomaru Y."/>
            <person name="Fukuda S."/>
            <person name="Kanamori-Katayama M."/>
            <person name="Suzuki M."/>
            <person name="Aoki J."/>
            <person name="Arakawa T."/>
            <person name="Iida J."/>
            <person name="Imamura K."/>
            <person name="Itoh M."/>
            <person name="Kato T."/>
            <person name="Kawaji H."/>
            <person name="Kawagashira N."/>
            <person name="Kawashima T."/>
            <person name="Kojima M."/>
            <person name="Kondo S."/>
            <person name="Konno H."/>
            <person name="Nakano K."/>
            <person name="Ninomiya N."/>
            <person name="Nishio T."/>
            <person name="Okada M."/>
            <person name="Plessy C."/>
            <person name="Shibata K."/>
            <person name="Shiraki T."/>
            <person name="Suzuki S."/>
            <person name="Tagami M."/>
            <person name="Waki K."/>
            <person name="Watahiki A."/>
            <person name="Okamura-Oho Y."/>
            <person name="Suzuki H."/>
            <person name="Kawai J."/>
            <person name="Hayashizaki Y."/>
        </authorList>
    </citation>
    <scope>NUCLEOTIDE SEQUENCE [LARGE SCALE MRNA]</scope>
    <source>
        <strain>C57BL/6J</strain>
        <tissue>Hippocampus</tissue>
        <tissue>Skin</tissue>
        <tissue>Stomach</tissue>
    </source>
</reference>
<reference key="3">
    <citation type="journal article" date="2004" name="Genome Res.">
        <title>The status, quality, and expansion of the NIH full-length cDNA project: the Mammalian Gene Collection (MGC).</title>
        <authorList>
            <consortium name="The MGC Project Team"/>
        </authorList>
    </citation>
    <scope>NUCLEOTIDE SEQUENCE [LARGE SCALE MRNA]</scope>
    <source>
        <tissue>Mammary gland</tissue>
    </source>
</reference>
<reference key="4">
    <citation type="journal article" date="2003" name="J. Biol. Chem.">
        <title>Two mammalian longevity assurance gene (LAG1) family members, trh1 and trh4, regulate dihydroceramide synthesis using different fatty acyl-CoA donors.</title>
        <authorList>
            <person name="Riebeling C."/>
            <person name="Allegood J.C."/>
            <person name="Wang E."/>
            <person name="Merrill A.H. Jr."/>
            <person name="Futerman A.H."/>
        </authorList>
    </citation>
    <scope>FUNCTION</scope>
    <scope>TISSUE SPECIFICITY</scope>
    <scope>SUBCELLULAR LOCATION</scope>
    <scope>CATALYTIC ACTIVITY</scope>
    <scope>PATHWAY</scope>
</reference>
<reference key="5">
    <citation type="journal article" date="2005" name="Biochem. J.">
        <title>Mammalian Lass6 and its related family members regulate synthesis of specific ceramides.</title>
        <authorList>
            <person name="Mizutani Y."/>
            <person name="Kihara A."/>
            <person name="Igarashi Y."/>
        </authorList>
    </citation>
    <scope>FUNCTION</scope>
    <scope>CATALYTIC ACTIVITY</scope>
    <scope>TISSUE SPECIFICITY</scope>
    <scope>PATHWAY</scope>
</reference>
<reference key="6">
    <citation type="journal article" date="2010" name="Cell">
        <title>A tissue-specific atlas of mouse protein phosphorylation and expression.</title>
        <authorList>
            <person name="Huttlin E.L."/>
            <person name="Jedrychowski M.P."/>
            <person name="Elias J.E."/>
            <person name="Goswami T."/>
            <person name="Rad R."/>
            <person name="Beausoleil S.A."/>
            <person name="Villen J."/>
            <person name="Haas W."/>
            <person name="Sowa M.E."/>
            <person name="Gygi S.P."/>
        </authorList>
    </citation>
    <scope>PHOSPHORYLATION [LARGE SCALE ANALYSIS] AT SER-342; SER-349 AND SER-350</scope>
    <scope>IDENTIFICATION BY MASS SPECTROMETRY [LARGE SCALE ANALYSIS]</scope>
    <source>
        <tissue>Brain</tissue>
    </source>
</reference>
<organism>
    <name type="scientific">Mus musculus</name>
    <name type="common">Mouse</name>
    <dbReference type="NCBI Taxonomy" id="10090"/>
    <lineage>
        <taxon>Eukaryota</taxon>
        <taxon>Metazoa</taxon>
        <taxon>Chordata</taxon>
        <taxon>Craniata</taxon>
        <taxon>Vertebrata</taxon>
        <taxon>Euteleostomi</taxon>
        <taxon>Mammalia</taxon>
        <taxon>Eutheria</taxon>
        <taxon>Euarchontoglires</taxon>
        <taxon>Glires</taxon>
        <taxon>Rodentia</taxon>
        <taxon>Myomorpha</taxon>
        <taxon>Muroidea</taxon>
        <taxon>Muridae</taxon>
        <taxon>Murinae</taxon>
        <taxon>Mus</taxon>
        <taxon>Mus</taxon>
    </lineage>
</organism>
<gene>
    <name evidence="10" type="primary">Cers4</name>
    <name evidence="8" type="synonym">Lass4</name>
    <name evidence="7" type="synonym">Trh1</name>
</gene>
<proteinExistence type="evidence at protein level"/>
<comment type="function">
    <text evidence="5 6">Ceramide synthase that catalyzes formation of ceramide from sphinganine and acyl-CoA substrates, with high selectivity toward long and very-long chains (C18:0-C22:0) as acyl donor.</text>
</comment>
<comment type="catalytic activity">
    <reaction evidence="5 6">
        <text>sphinganine + octadecanoyl-CoA = N-(octadecanoyl)-sphinganine + CoA + H(+)</text>
        <dbReference type="Rhea" id="RHEA:36547"/>
        <dbReference type="ChEBI" id="CHEBI:15378"/>
        <dbReference type="ChEBI" id="CHEBI:57287"/>
        <dbReference type="ChEBI" id="CHEBI:57394"/>
        <dbReference type="ChEBI" id="CHEBI:57817"/>
        <dbReference type="ChEBI" id="CHEBI:67033"/>
    </reaction>
    <physiologicalReaction direction="left-to-right" evidence="5 6">
        <dbReference type="Rhea" id="RHEA:36548"/>
    </physiologicalReaction>
</comment>
<comment type="catalytic activity">
    <reaction evidence="5">
        <text>eicosanoyl-CoA + sphinganine = N-eicosanoylsphinganine + CoA + H(+)</text>
        <dbReference type="Rhea" id="RHEA:36555"/>
        <dbReference type="ChEBI" id="CHEBI:15378"/>
        <dbReference type="ChEBI" id="CHEBI:57287"/>
        <dbReference type="ChEBI" id="CHEBI:57380"/>
        <dbReference type="ChEBI" id="CHEBI:57817"/>
        <dbReference type="ChEBI" id="CHEBI:67027"/>
    </reaction>
    <physiologicalReaction direction="left-to-right" evidence="5">
        <dbReference type="Rhea" id="RHEA:36556"/>
    </physiologicalReaction>
</comment>
<comment type="catalytic activity">
    <reaction evidence="6">
        <text>docosanoyl-CoA + sphinganine = N-docosanoylsphinganine + CoA + H(+)</text>
        <dbReference type="Rhea" id="RHEA:36535"/>
        <dbReference type="ChEBI" id="CHEBI:15378"/>
        <dbReference type="ChEBI" id="CHEBI:57287"/>
        <dbReference type="ChEBI" id="CHEBI:57817"/>
        <dbReference type="ChEBI" id="CHEBI:65059"/>
        <dbReference type="ChEBI" id="CHEBI:67021"/>
    </reaction>
    <physiologicalReaction direction="left-to-right" evidence="6">
        <dbReference type="Rhea" id="RHEA:36536"/>
    </physiologicalReaction>
</comment>
<comment type="catalytic activity">
    <reaction evidence="6">
        <text>tetracosanoyl-CoA + sphinganine = N-tetracosanoylsphinganine + CoA + H(+)</text>
        <dbReference type="Rhea" id="RHEA:33591"/>
        <dbReference type="ChEBI" id="CHEBI:15378"/>
        <dbReference type="ChEBI" id="CHEBI:52961"/>
        <dbReference type="ChEBI" id="CHEBI:57287"/>
        <dbReference type="ChEBI" id="CHEBI:57817"/>
        <dbReference type="ChEBI" id="CHEBI:65052"/>
    </reaction>
    <physiologicalReaction direction="left-to-right" evidence="6">
        <dbReference type="Rhea" id="RHEA:33592"/>
    </physiologicalReaction>
</comment>
<comment type="catalytic activity">
    <reaction evidence="6">
        <text>hexacosanoyl-CoA + sphinganine = N-hexacosanoylsphinganine + CoA + H(+)</text>
        <dbReference type="Rhea" id="RHEA:33351"/>
        <dbReference type="ChEBI" id="CHEBI:15378"/>
        <dbReference type="ChEBI" id="CHEBI:52962"/>
        <dbReference type="ChEBI" id="CHEBI:57287"/>
        <dbReference type="ChEBI" id="CHEBI:57817"/>
        <dbReference type="ChEBI" id="CHEBI:64868"/>
    </reaction>
    <physiologicalReaction direction="left-to-right" evidence="6">
        <dbReference type="Rhea" id="RHEA:33352"/>
    </physiologicalReaction>
</comment>
<comment type="catalytic activity">
    <reaction evidence="5">
        <text>a fatty acyl-CoA + sphing-4-enine = an N-acylsphing-4-enine + CoA + H(+)</text>
        <dbReference type="Rhea" id="RHEA:23768"/>
        <dbReference type="ChEBI" id="CHEBI:15378"/>
        <dbReference type="ChEBI" id="CHEBI:52639"/>
        <dbReference type="ChEBI" id="CHEBI:57287"/>
        <dbReference type="ChEBI" id="CHEBI:57756"/>
        <dbReference type="ChEBI" id="CHEBI:77636"/>
        <dbReference type="EC" id="2.3.1.24"/>
    </reaction>
    <physiologicalReaction direction="left-to-right" evidence="5">
        <dbReference type="Rhea" id="RHEA:23769"/>
    </physiologicalReaction>
</comment>
<comment type="catalytic activity">
    <reaction evidence="5">
        <text>sphing-4-enine + octadecanoyl-CoA = N-octadecanoylsphing-4-enine + CoA + H(+)</text>
        <dbReference type="Rhea" id="RHEA:36691"/>
        <dbReference type="ChEBI" id="CHEBI:15378"/>
        <dbReference type="ChEBI" id="CHEBI:57287"/>
        <dbReference type="ChEBI" id="CHEBI:57394"/>
        <dbReference type="ChEBI" id="CHEBI:57756"/>
        <dbReference type="ChEBI" id="CHEBI:72961"/>
    </reaction>
    <physiologicalReaction direction="left-to-right" evidence="5">
        <dbReference type="Rhea" id="RHEA:36692"/>
    </physiologicalReaction>
</comment>
<comment type="catalytic activity">
    <reaction evidence="1">
        <text>hexadecasphinganine + octadecanoyl-CoA = N-octadecanoylhexadecasphinganine + CoA + H(+)</text>
        <dbReference type="Rhea" id="RHEA:43044"/>
        <dbReference type="ChEBI" id="CHEBI:15378"/>
        <dbReference type="ChEBI" id="CHEBI:57287"/>
        <dbReference type="ChEBI" id="CHEBI:57394"/>
        <dbReference type="ChEBI" id="CHEBI:71009"/>
        <dbReference type="ChEBI" id="CHEBI:82811"/>
    </reaction>
    <physiologicalReaction direction="left-to-right" evidence="1">
        <dbReference type="Rhea" id="RHEA:43045"/>
    </physiologicalReaction>
</comment>
<comment type="pathway">
    <text evidence="5 6">Lipid metabolism; sphingolipid metabolism.</text>
</comment>
<comment type="subcellular location">
    <subcellularLocation>
        <location evidence="5">Endoplasmic reticulum membrane</location>
        <topology evidence="2">Multi-pass membrane protein</topology>
    </subcellularLocation>
</comment>
<comment type="tissue specificity">
    <text evidence="5 6">Ubiquitously expressed, with highest levels in skin.</text>
</comment>
<comment type="domain">
    <text evidence="1">The last loop motif confers selectivity toward stearoyl-CoA (octadecanoyl-CoA; C18:0-CoA) to behenoyl-CoA (docosanoyl-CoA; C22:0-CoA) as acyl donors.</text>
</comment>
<comment type="PTM">
    <text evidence="1">Phosphorylated at the C-terminus by CK2.</text>
</comment>
<comment type="caution">
    <text evidence="2 5">Some prediction bioinformatics tools predict the presence of a homeobox domain (By similarity). However, the domain is degenerate and residues that are important for DNA-binding are absent (By similarity). Moreover, the protein localizes in the endoplasmic reticulum and not in the nucleus, strongly suggesting that it does not constitute a canonical homeobox domain (PubMed:12912983).</text>
</comment>
<accession>Q9D6J1</accession>
<accession>Q8BZA6</accession>
<accession>Q8C151</accession>
<accession>Q9CX09</accession>
<evidence type="ECO:0000250" key="1">
    <source>
        <dbReference type="UniProtKB" id="Q9HA82"/>
    </source>
</evidence>
<evidence type="ECO:0000255" key="2"/>
<evidence type="ECO:0000255" key="3">
    <source>
        <dbReference type="PROSITE-ProRule" id="PRU00205"/>
    </source>
</evidence>
<evidence type="ECO:0000256" key="4">
    <source>
        <dbReference type="SAM" id="MobiDB-lite"/>
    </source>
</evidence>
<evidence type="ECO:0000269" key="5">
    <source>
    </source>
</evidence>
<evidence type="ECO:0000269" key="6">
    <source>
    </source>
</evidence>
<evidence type="ECO:0000303" key="7">
    <source>
    </source>
</evidence>
<evidence type="ECO:0000303" key="8">
    <source>
    </source>
</evidence>
<evidence type="ECO:0000305" key="9"/>
<evidence type="ECO:0000312" key="10">
    <source>
        <dbReference type="MGI" id="MGI:1914510"/>
    </source>
</evidence>
<evidence type="ECO:0007744" key="11">
    <source>
    </source>
</evidence>
<feature type="chain" id="PRO_0000185513" description="Ceramide synthase 4">
    <location>
        <begin position="1"/>
        <end position="393"/>
    </location>
</feature>
<feature type="topological domain" description="Lumenal" evidence="1">
    <location>
        <begin position="1"/>
        <end position="31"/>
    </location>
</feature>
<feature type="transmembrane region" description="Helical" evidence="2">
    <location>
        <begin position="32"/>
        <end position="52"/>
    </location>
</feature>
<feature type="transmembrane region" description="Helical" evidence="2">
    <location>
        <begin position="140"/>
        <end position="160"/>
    </location>
</feature>
<feature type="transmembrane region" description="Helical" evidence="2">
    <location>
        <begin position="179"/>
        <end position="199"/>
    </location>
</feature>
<feature type="transmembrane region" description="Helical" evidence="2">
    <location>
        <begin position="217"/>
        <end position="237"/>
    </location>
</feature>
<feature type="transmembrane region" description="Helical" evidence="2">
    <location>
        <begin position="265"/>
        <end position="285"/>
    </location>
</feature>
<feature type="transmembrane region" description="Helical" evidence="2">
    <location>
        <begin position="304"/>
        <end position="324"/>
    </location>
</feature>
<feature type="topological domain" description="Cytoplasmic" evidence="1">
    <location>
        <begin position="325"/>
        <end position="393"/>
    </location>
</feature>
<feature type="domain" description="TLC" evidence="3">
    <location>
        <begin position="131"/>
        <end position="332"/>
    </location>
</feature>
<feature type="region of interest" description="Homeobox-like" evidence="9">
    <location>
        <begin position="67"/>
        <end position="128"/>
    </location>
</feature>
<feature type="region of interest" description="Disordered" evidence="4">
    <location>
        <begin position="341"/>
        <end position="393"/>
    </location>
</feature>
<feature type="short sequence motif" description="Last loop motif" evidence="1">
    <location>
        <begin position="291"/>
        <end position="301"/>
    </location>
</feature>
<feature type="compositionally biased region" description="Acidic residues" evidence="4">
    <location>
        <begin position="345"/>
        <end position="355"/>
    </location>
</feature>
<feature type="modified residue" description="Phosphoserine" evidence="11">
    <location>
        <position position="342"/>
    </location>
</feature>
<feature type="modified residue" description="Phosphoserine" evidence="11">
    <location>
        <position position="349"/>
    </location>
</feature>
<feature type="modified residue" description="Phosphoserine" evidence="11">
    <location>
        <position position="350"/>
    </location>
</feature>
<feature type="glycosylation site" description="N-linked (GlcNAc...) asparagine" evidence="2">
    <location>
        <position position="19"/>
    </location>
</feature>
<feature type="sequence conflict" description="In Ref. 2; BAC26208." evidence="9" ref="2">
    <original>N</original>
    <variation>S</variation>
    <location>
        <position position="19"/>
    </location>
</feature>
<feature type="sequence conflict" description="In Ref. 2; BAB32370." evidence="9" ref="2">
    <original>L</original>
    <variation>M</variation>
    <location>
        <position position="237"/>
    </location>
</feature>
<keyword id="KW-0256">Endoplasmic reticulum</keyword>
<keyword id="KW-0325">Glycoprotein</keyword>
<keyword id="KW-0444">Lipid biosynthesis</keyword>
<keyword id="KW-0443">Lipid metabolism</keyword>
<keyword id="KW-0472">Membrane</keyword>
<keyword id="KW-0597">Phosphoprotein</keyword>
<keyword id="KW-1185">Reference proteome</keyword>
<keyword id="KW-0808">Transferase</keyword>
<keyword id="KW-0812">Transmembrane</keyword>
<keyword id="KW-1133">Transmembrane helix</keyword>
<name>CERS4_MOUSE</name>